<accession>Q8WI25</accession>
<reference key="1">
    <citation type="journal article" date="2004" name="Mol. Biol. Evol.">
        <title>Chloroplast phylogeny indicates that bryophytes are monophyletic.</title>
        <authorList>
            <person name="Nishiyama T."/>
            <person name="Wolf P.G."/>
            <person name="Kugita M."/>
            <person name="Sinclair R.B."/>
            <person name="Sugita M."/>
            <person name="Sugiura C."/>
            <person name="Wakasugi T."/>
            <person name="Yamada K."/>
            <person name="Yoshinaga K."/>
            <person name="Yamaguchi K."/>
            <person name="Ueda K."/>
            <person name="Hasebe M."/>
        </authorList>
    </citation>
    <scope>NUCLEOTIDE SEQUENCE [LARGE SCALE GENOMIC DNA]</scope>
    <source>
        <strain>Kingyoku</strain>
    </source>
</reference>
<evidence type="ECO:0000255" key="1">
    <source>
        <dbReference type="HAMAP-Rule" id="MF_01323"/>
    </source>
</evidence>
<comment type="function">
    <text evidence="1">DNA-dependent RNA polymerase catalyzes the transcription of DNA into RNA using the four ribonucleoside triphosphates as substrates.</text>
</comment>
<comment type="catalytic activity">
    <reaction evidence="1">
        <text>RNA(n) + a ribonucleoside 5'-triphosphate = RNA(n+1) + diphosphate</text>
        <dbReference type="Rhea" id="RHEA:21248"/>
        <dbReference type="Rhea" id="RHEA-COMP:14527"/>
        <dbReference type="Rhea" id="RHEA-COMP:17342"/>
        <dbReference type="ChEBI" id="CHEBI:33019"/>
        <dbReference type="ChEBI" id="CHEBI:61557"/>
        <dbReference type="ChEBI" id="CHEBI:140395"/>
        <dbReference type="EC" id="2.7.7.6"/>
    </reaction>
</comment>
<comment type="cofactor">
    <cofactor evidence="1">
        <name>Mg(2+)</name>
        <dbReference type="ChEBI" id="CHEBI:18420"/>
    </cofactor>
    <text evidence="1">Binds 1 Mg(2+) ion per subunit.</text>
</comment>
<comment type="cofactor">
    <cofactor evidence="1">
        <name>Zn(2+)</name>
        <dbReference type="ChEBI" id="CHEBI:29105"/>
    </cofactor>
    <text evidence="1">Binds 1 Zn(2+) ion per subunit.</text>
</comment>
<comment type="subunit">
    <text evidence="1">In plastids the minimal PEP RNA polymerase catalytic core is composed of four subunits: alpha, beta, beta', and beta''. When a (nuclear-encoded) sigma factor is associated with the core the holoenzyme is formed, which can initiate transcription.</text>
</comment>
<comment type="subcellular location">
    <subcellularLocation>
        <location evidence="1">Plastid</location>
        <location evidence="1">Chloroplast</location>
    </subcellularLocation>
</comment>
<comment type="similarity">
    <text evidence="1">Belongs to the RNA polymerase beta' chain family. RpoC1 subfamily.</text>
</comment>
<organism>
    <name type="scientific">Psilotum nudum</name>
    <name type="common">Whisk fern</name>
    <name type="synonym">Lycopodium nudum</name>
    <dbReference type="NCBI Taxonomy" id="3240"/>
    <lineage>
        <taxon>Eukaryota</taxon>
        <taxon>Viridiplantae</taxon>
        <taxon>Streptophyta</taxon>
        <taxon>Embryophyta</taxon>
        <taxon>Tracheophyta</taxon>
        <taxon>Polypodiopsida</taxon>
        <taxon>Ophioglossidae</taxon>
        <taxon>Psilotales</taxon>
        <taxon>Psilotaceae</taxon>
        <taxon>Psilotum</taxon>
    </lineage>
</organism>
<keyword id="KW-0150">Chloroplast</keyword>
<keyword id="KW-0240">DNA-directed RNA polymerase</keyword>
<keyword id="KW-0460">Magnesium</keyword>
<keyword id="KW-0479">Metal-binding</keyword>
<keyword id="KW-0548">Nucleotidyltransferase</keyword>
<keyword id="KW-0934">Plastid</keyword>
<keyword id="KW-0804">Transcription</keyword>
<keyword id="KW-0808">Transferase</keyword>
<keyword id="KW-0862">Zinc</keyword>
<gene>
    <name evidence="1" type="primary">rpoC1</name>
</gene>
<protein>
    <recommendedName>
        <fullName evidence="1">DNA-directed RNA polymerase subunit beta'</fullName>
        <ecNumber evidence="1">2.7.7.6</ecNumber>
    </recommendedName>
    <alternativeName>
        <fullName evidence="1">PEP</fullName>
    </alternativeName>
    <alternativeName>
        <fullName evidence="1">Plastid-encoded RNA polymerase subunit beta'</fullName>
        <shortName evidence="1">RNA polymerase subunit beta'</shortName>
    </alternativeName>
</protein>
<proteinExistence type="inferred from homology"/>
<geneLocation type="chloroplast"/>
<feature type="chain" id="PRO_0000067893" description="DNA-directed RNA polymerase subunit beta'">
    <location>
        <begin position="1"/>
        <end position="674"/>
    </location>
</feature>
<feature type="binding site" evidence="1">
    <location>
        <position position="69"/>
    </location>
    <ligand>
        <name>Zn(2+)</name>
        <dbReference type="ChEBI" id="CHEBI:29105"/>
    </ligand>
</feature>
<feature type="binding site" evidence="1">
    <location>
        <position position="71"/>
    </location>
    <ligand>
        <name>Zn(2+)</name>
        <dbReference type="ChEBI" id="CHEBI:29105"/>
    </ligand>
</feature>
<feature type="binding site" evidence="1">
    <location>
        <position position="87"/>
    </location>
    <ligand>
        <name>Zn(2+)</name>
        <dbReference type="ChEBI" id="CHEBI:29105"/>
    </ligand>
</feature>
<feature type="binding site" evidence="1">
    <location>
        <position position="90"/>
    </location>
    <ligand>
        <name>Zn(2+)</name>
        <dbReference type="ChEBI" id="CHEBI:29105"/>
    </ligand>
</feature>
<feature type="binding site" evidence="1">
    <location>
        <position position="494"/>
    </location>
    <ligand>
        <name>Mg(2+)</name>
        <dbReference type="ChEBI" id="CHEBI:18420"/>
    </ligand>
</feature>
<feature type="binding site" evidence="1">
    <location>
        <position position="496"/>
    </location>
    <ligand>
        <name>Mg(2+)</name>
        <dbReference type="ChEBI" id="CHEBI:18420"/>
    </ligand>
</feature>
<feature type="binding site" evidence="1">
    <location>
        <position position="498"/>
    </location>
    <ligand>
        <name>Mg(2+)</name>
        <dbReference type="ChEBI" id="CHEBI:18420"/>
    </ligand>
</feature>
<sequence length="674" mass="77971">MIHKNNYQQLRIGLASPEQIRAWAERILPTGEIVGKVTQPYTLHYKTHKPERDGLFCERIFGPIKSGFCACGNYQAVDNGKEFSSFCKQCGVEFTESRVRRYQMGYIELACPVTHVWYLKRLPSYIANLLAKPLNDLESLVYCDITYPNLYLARPIAEKPTLLQLKGFFKYEDQSWRYLFPRFFSTRGFEAFKSREIATGGDAVRKELASLNLKTVMECTYLEWKDLAKQKPTGNEWEDRGIQRIKDFMVRRIRLVKHFLYTDVKPEWMVLSLLPVLPPELRPMIEVSGGLLLTSDLNELYRKVIYRNNTLIDFLLRSEFTPEGLIVCQKRLVQEAVDALIDNGIRGQPIRDSHNRPYKSFSDIIEGKEGRFRENLLGKRVDYSGRSVIVVGPSLPLHRCGLPREMAIELFQAFVIRGLIGRYLAQNLRDAKNMIQNKEPIIWKILRDVMQGHPVLLNRAPTLHRLGIQAFQPILIEGRAIRLHPLVCGGFNADFDGDQMAVHVPLSLEAQAEARFLMLSHTNLLSPATGDPIAVPTQDMLLGLHILTIEDSQGIYGVRYFPYSKRNCTSFFKIPYFNSYDDVLRAKEQRQIHFYSPIWLRWKGFLRVITSINREFPIEIQYESSNISVHIYENYQIRKDKKGNRLSLYIRTTAGRVLFNQQIEEAIQGTLKAF</sequence>
<dbReference type="EC" id="2.7.7.6" evidence="1"/>
<dbReference type="EMBL" id="AP004638">
    <property type="protein sequence ID" value="BAB84207.1"/>
    <property type="molecule type" value="Genomic_DNA"/>
</dbReference>
<dbReference type="RefSeq" id="NP_569620.1">
    <property type="nucleotide sequence ID" value="NC_003386.1"/>
</dbReference>
<dbReference type="SMR" id="Q8WI25"/>
<dbReference type="GeneID" id="2545168"/>
<dbReference type="GO" id="GO:0009507">
    <property type="term" value="C:chloroplast"/>
    <property type="evidence" value="ECO:0007669"/>
    <property type="project" value="UniProtKB-SubCell"/>
</dbReference>
<dbReference type="GO" id="GO:0000428">
    <property type="term" value="C:DNA-directed RNA polymerase complex"/>
    <property type="evidence" value="ECO:0007669"/>
    <property type="project" value="UniProtKB-KW"/>
</dbReference>
<dbReference type="GO" id="GO:0005739">
    <property type="term" value="C:mitochondrion"/>
    <property type="evidence" value="ECO:0007669"/>
    <property type="project" value="GOC"/>
</dbReference>
<dbReference type="GO" id="GO:0003677">
    <property type="term" value="F:DNA binding"/>
    <property type="evidence" value="ECO:0007669"/>
    <property type="project" value="UniProtKB-UniRule"/>
</dbReference>
<dbReference type="GO" id="GO:0003899">
    <property type="term" value="F:DNA-directed RNA polymerase activity"/>
    <property type="evidence" value="ECO:0007669"/>
    <property type="project" value="UniProtKB-UniRule"/>
</dbReference>
<dbReference type="GO" id="GO:0000287">
    <property type="term" value="F:magnesium ion binding"/>
    <property type="evidence" value="ECO:0007669"/>
    <property type="project" value="UniProtKB-UniRule"/>
</dbReference>
<dbReference type="GO" id="GO:0008270">
    <property type="term" value="F:zinc ion binding"/>
    <property type="evidence" value="ECO:0007669"/>
    <property type="project" value="UniProtKB-UniRule"/>
</dbReference>
<dbReference type="GO" id="GO:0006351">
    <property type="term" value="P:DNA-templated transcription"/>
    <property type="evidence" value="ECO:0007669"/>
    <property type="project" value="UniProtKB-UniRule"/>
</dbReference>
<dbReference type="Gene3D" id="1.10.40.90">
    <property type="match status" value="1"/>
</dbReference>
<dbReference type="Gene3D" id="2.40.40.20">
    <property type="match status" value="1"/>
</dbReference>
<dbReference type="Gene3D" id="4.10.860.120">
    <property type="entry name" value="RNA polymerase II, clamp domain"/>
    <property type="match status" value="1"/>
</dbReference>
<dbReference type="Gene3D" id="1.10.274.100">
    <property type="entry name" value="RNA polymerase Rpb1, domain 3"/>
    <property type="match status" value="1"/>
</dbReference>
<dbReference type="HAMAP" id="MF_01323">
    <property type="entry name" value="RNApol_bact_RpoC1"/>
    <property type="match status" value="1"/>
</dbReference>
<dbReference type="InterPro" id="IPR045867">
    <property type="entry name" value="DNA-dir_RpoC_beta_prime"/>
</dbReference>
<dbReference type="InterPro" id="IPR000722">
    <property type="entry name" value="RNA_pol_asu"/>
</dbReference>
<dbReference type="InterPro" id="IPR006592">
    <property type="entry name" value="RNA_pol_N"/>
</dbReference>
<dbReference type="InterPro" id="IPR007080">
    <property type="entry name" value="RNA_pol_Rpb1_1"/>
</dbReference>
<dbReference type="InterPro" id="IPR007066">
    <property type="entry name" value="RNA_pol_Rpb1_3"/>
</dbReference>
<dbReference type="InterPro" id="IPR042102">
    <property type="entry name" value="RNA_pol_Rpb1_3_sf"/>
</dbReference>
<dbReference type="InterPro" id="IPR044893">
    <property type="entry name" value="RNA_pol_Rpb1_clamp_domain"/>
</dbReference>
<dbReference type="InterPro" id="IPR034678">
    <property type="entry name" value="RNApol_RpoC1"/>
</dbReference>
<dbReference type="PANTHER" id="PTHR19376">
    <property type="entry name" value="DNA-DIRECTED RNA POLYMERASE"/>
    <property type="match status" value="1"/>
</dbReference>
<dbReference type="PANTHER" id="PTHR19376:SF54">
    <property type="entry name" value="DNA-DIRECTED RNA POLYMERASE SUBUNIT BETA"/>
    <property type="match status" value="1"/>
</dbReference>
<dbReference type="Pfam" id="PF04997">
    <property type="entry name" value="RNA_pol_Rpb1_1"/>
    <property type="match status" value="1"/>
</dbReference>
<dbReference type="Pfam" id="PF00623">
    <property type="entry name" value="RNA_pol_Rpb1_2"/>
    <property type="match status" value="2"/>
</dbReference>
<dbReference type="Pfam" id="PF04983">
    <property type="entry name" value="RNA_pol_Rpb1_3"/>
    <property type="match status" value="1"/>
</dbReference>
<dbReference type="SMART" id="SM00663">
    <property type="entry name" value="RPOLA_N"/>
    <property type="match status" value="1"/>
</dbReference>
<dbReference type="SUPFAM" id="SSF64484">
    <property type="entry name" value="beta and beta-prime subunits of DNA dependent RNA-polymerase"/>
    <property type="match status" value="1"/>
</dbReference>
<name>RPOC1_PSINU</name>